<accession>Q7T6T0</accession>
<keyword id="KW-0053">Apoptosis</keyword>
<keyword id="KW-1040">Host Golgi apparatus</keyword>
<keyword id="KW-1043">Host membrane</keyword>
<keyword id="KW-0472">Membrane</keyword>
<keyword id="KW-0812">Transmembrane</keyword>
<keyword id="KW-1133">Transmembrane helix</keyword>
<gene>
    <name evidence="1" type="primary">E</name>
    <name type="synonym">sM</name>
</gene>
<comment type="function">
    <text evidence="1">Plays a central role in virus morphogenesis and assembly. Acts as a viroporin and self-assembles in host membranes forming pentameric protein-lipid pores that allow ion transport. Also plays a role in the induction of apoptosis.</text>
</comment>
<comment type="subunit">
    <text evidence="1">Homopentamer. Interacts with membrane protein M in the budding compartment of the host cell, which is located between endoplasmic reticulum and the Golgi complex. Interacts with Nucleoprotein.</text>
</comment>
<comment type="subcellular location">
    <subcellularLocation>
        <location evidence="1">Host Golgi apparatus membrane</location>
        <topology evidence="1">Single-pass type III membrane protein</topology>
    </subcellularLocation>
    <text evidence="1">The cytoplasmic tail functions as a Golgi complex-targeting signal.</text>
</comment>
<comment type="similarity">
    <text evidence="1">Belongs to the alphacoronaviruses E protein family.</text>
</comment>
<evidence type="ECO:0000255" key="1">
    <source>
        <dbReference type="HAMAP-Rule" id="MF_04205"/>
    </source>
</evidence>
<proteinExistence type="inferred from homology"/>
<feature type="chain" id="PRO_0000289933" description="Envelope small membrane protein">
    <location>
        <begin position="1"/>
        <end position="82"/>
    </location>
</feature>
<feature type="topological domain" description="Virion surface" evidence="1">
    <location>
        <begin position="1"/>
        <end position="19"/>
    </location>
</feature>
<feature type="transmembrane region" description="Helical" evidence="1">
    <location>
        <begin position="20"/>
        <end position="40"/>
    </location>
</feature>
<feature type="topological domain" description="Intravirion" evidence="1">
    <location>
        <begin position="41"/>
        <end position="82"/>
    </location>
</feature>
<name>VEMP_CVCBG</name>
<protein>
    <recommendedName>
        <fullName evidence="1">Envelope small membrane protein</fullName>
        <shortName evidence="1">E protein</shortName>
        <shortName evidence="1">sM protein</shortName>
    </recommendedName>
</protein>
<sequence>MTFPRALTVIDDNGMVISIIFWLLLIIILILFSIALLNIIKLCMVCCNLGRTVVVIPVRHAYDAYKNFMRINAYNHNEALLV</sequence>
<organism>
    <name type="scientific">Canine coronavirus (strain BGF10)</name>
    <name type="common">CCoV</name>
    <name type="synonym">Canine enteric coronavirus</name>
    <dbReference type="NCBI Taxonomy" id="441619"/>
    <lineage>
        <taxon>Viruses</taxon>
        <taxon>Riboviria</taxon>
        <taxon>Orthornavirae</taxon>
        <taxon>Pisuviricota</taxon>
        <taxon>Pisoniviricetes</taxon>
        <taxon>Nidovirales</taxon>
        <taxon>Cornidovirineae</taxon>
        <taxon>Coronaviridae</taxon>
        <taxon>Orthocoronavirinae</taxon>
        <taxon>Alphacoronavirus</taxon>
        <taxon>Tegacovirus</taxon>
        <taxon>Alphacoronavirus 1</taxon>
    </lineage>
</organism>
<reference key="1">
    <citation type="journal article" date="2004" name="Virus Res.">
        <title>Molecular characterization of a virulent canine coronavirus BGF strain.</title>
        <authorList>
            <person name="Sanchez-Morgado J.M."/>
            <person name="Poynter S."/>
            <person name="Morris T.H."/>
        </authorList>
    </citation>
    <scope>NUCLEOTIDE SEQUENCE [GENOMIC RNA]</scope>
</reference>
<dbReference type="EMBL" id="AY342160">
    <property type="protein sequence ID" value="AAQ17223.1"/>
    <property type="molecule type" value="Genomic_RNA"/>
</dbReference>
<dbReference type="GO" id="GO:0044178">
    <property type="term" value="C:host cell Golgi membrane"/>
    <property type="evidence" value="ECO:0007669"/>
    <property type="project" value="UniProtKB-SubCell"/>
</dbReference>
<dbReference type="GO" id="GO:0016020">
    <property type="term" value="C:membrane"/>
    <property type="evidence" value="ECO:0007669"/>
    <property type="project" value="UniProtKB-UniRule"/>
</dbReference>
<dbReference type="GO" id="GO:0140975">
    <property type="term" value="P:disruption of cellular anatomical structure in another organism"/>
    <property type="evidence" value="ECO:0007669"/>
    <property type="project" value="UniProtKB-UniRule"/>
</dbReference>
<dbReference type="GO" id="GO:0046760">
    <property type="term" value="P:viral budding from Golgi membrane"/>
    <property type="evidence" value="ECO:0007669"/>
    <property type="project" value="UniProtKB-UniRule"/>
</dbReference>
<dbReference type="HAMAP" id="MF_04205">
    <property type="entry name" value="ALPHA_CORONA_E"/>
    <property type="match status" value="1"/>
</dbReference>
<dbReference type="InterPro" id="IPR043507">
    <property type="entry name" value="E_protein_aCoV"/>
</dbReference>
<dbReference type="InterPro" id="IPR003873">
    <property type="entry name" value="E_protein_CoV"/>
</dbReference>
<dbReference type="Pfam" id="PF02723">
    <property type="entry name" value="CoV_E"/>
    <property type="match status" value="1"/>
</dbReference>
<dbReference type="PROSITE" id="PS51926">
    <property type="entry name" value="COV_E"/>
    <property type="match status" value="1"/>
</dbReference>
<organismHost>
    <name type="scientific">Canis lupus familiaris</name>
    <name type="common">Dog</name>
    <name type="synonym">Canis familiaris</name>
    <dbReference type="NCBI Taxonomy" id="9615"/>
</organismHost>